<gene>
    <name evidence="1" type="primary">ispF</name>
    <name type="ordered locus">ECIAI1_2847</name>
</gene>
<organism>
    <name type="scientific">Escherichia coli O8 (strain IAI1)</name>
    <dbReference type="NCBI Taxonomy" id="585034"/>
    <lineage>
        <taxon>Bacteria</taxon>
        <taxon>Pseudomonadati</taxon>
        <taxon>Pseudomonadota</taxon>
        <taxon>Gammaproteobacteria</taxon>
        <taxon>Enterobacterales</taxon>
        <taxon>Enterobacteriaceae</taxon>
        <taxon>Escherichia</taxon>
    </lineage>
</organism>
<name>ISPF_ECO8A</name>
<proteinExistence type="inferred from homology"/>
<comment type="function">
    <text evidence="1">Involved in the biosynthesis of isopentenyl diphosphate (IPP) and dimethylallyl diphosphate (DMAPP), two major building blocks of isoprenoid compounds. Catalyzes the conversion of 4-diphosphocytidyl-2-C-methyl-D-erythritol 2-phosphate (CDP-ME2P) to 2-C-methyl-D-erythritol 2,4-cyclodiphosphate (ME-CPP) with a corresponding release of cytidine 5-monophosphate (CMP).</text>
</comment>
<comment type="catalytic activity">
    <reaction evidence="1">
        <text>4-CDP-2-C-methyl-D-erythritol 2-phosphate = 2-C-methyl-D-erythritol 2,4-cyclic diphosphate + CMP</text>
        <dbReference type="Rhea" id="RHEA:23864"/>
        <dbReference type="ChEBI" id="CHEBI:57919"/>
        <dbReference type="ChEBI" id="CHEBI:58483"/>
        <dbReference type="ChEBI" id="CHEBI:60377"/>
        <dbReference type="EC" id="4.6.1.12"/>
    </reaction>
</comment>
<comment type="cofactor">
    <cofactor evidence="1">
        <name>a divalent metal cation</name>
        <dbReference type="ChEBI" id="CHEBI:60240"/>
    </cofactor>
    <text evidence="1">Binds 1 divalent metal cation per subunit.</text>
</comment>
<comment type="pathway">
    <text evidence="1">Isoprenoid biosynthesis; isopentenyl diphosphate biosynthesis via DXP pathway; isopentenyl diphosphate from 1-deoxy-D-xylulose 5-phosphate: step 4/6.</text>
</comment>
<comment type="subunit">
    <text evidence="1">Homotrimer.</text>
</comment>
<comment type="similarity">
    <text evidence="1">Belongs to the IspF family.</text>
</comment>
<protein>
    <recommendedName>
        <fullName evidence="1">2-C-methyl-D-erythritol 2,4-cyclodiphosphate synthase</fullName>
        <shortName evidence="1">MECDP-synthase</shortName>
        <shortName evidence="1">MECPP-synthase</shortName>
        <shortName evidence="1">MECPS</shortName>
        <ecNumber evidence="1">4.6.1.12</ecNumber>
    </recommendedName>
</protein>
<feature type="chain" id="PRO_1000117427" description="2-C-methyl-D-erythritol 2,4-cyclodiphosphate synthase">
    <location>
        <begin position="1"/>
        <end position="159"/>
    </location>
</feature>
<feature type="binding site" evidence="1">
    <location>
        <begin position="8"/>
        <end position="10"/>
    </location>
    <ligand>
        <name>4-CDP-2-C-methyl-D-erythritol 2-phosphate</name>
        <dbReference type="ChEBI" id="CHEBI:57919"/>
    </ligand>
</feature>
<feature type="binding site" evidence="1">
    <location>
        <position position="8"/>
    </location>
    <ligand>
        <name>a divalent metal cation</name>
        <dbReference type="ChEBI" id="CHEBI:60240"/>
    </ligand>
</feature>
<feature type="binding site" evidence="1">
    <location>
        <position position="10"/>
    </location>
    <ligand>
        <name>a divalent metal cation</name>
        <dbReference type="ChEBI" id="CHEBI:60240"/>
    </ligand>
</feature>
<feature type="binding site" evidence="1">
    <location>
        <begin position="34"/>
        <end position="35"/>
    </location>
    <ligand>
        <name>4-CDP-2-C-methyl-D-erythritol 2-phosphate</name>
        <dbReference type="ChEBI" id="CHEBI:57919"/>
    </ligand>
</feature>
<feature type="binding site" evidence="1">
    <location>
        <position position="42"/>
    </location>
    <ligand>
        <name>a divalent metal cation</name>
        <dbReference type="ChEBI" id="CHEBI:60240"/>
    </ligand>
</feature>
<feature type="binding site" evidence="1">
    <location>
        <begin position="56"/>
        <end position="58"/>
    </location>
    <ligand>
        <name>4-CDP-2-C-methyl-D-erythritol 2-phosphate</name>
        <dbReference type="ChEBI" id="CHEBI:57919"/>
    </ligand>
</feature>
<feature type="binding site" evidence="1">
    <location>
        <begin position="61"/>
        <end position="65"/>
    </location>
    <ligand>
        <name>4-CDP-2-C-methyl-D-erythritol 2-phosphate</name>
        <dbReference type="ChEBI" id="CHEBI:57919"/>
    </ligand>
</feature>
<feature type="binding site" evidence="1">
    <location>
        <begin position="100"/>
        <end position="106"/>
    </location>
    <ligand>
        <name>4-CDP-2-C-methyl-D-erythritol 2-phosphate</name>
        <dbReference type="ChEBI" id="CHEBI:57919"/>
    </ligand>
</feature>
<feature type="binding site" evidence="1">
    <location>
        <begin position="132"/>
        <end position="135"/>
    </location>
    <ligand>
        <name>4-CDP-2-C-methyl-D-erythritol 2-phosphate</name>
        <dbReference type="ChEBI" id="CHEBI:57919"/>
    </ligand>
</feature>
<feature type="binding site" evidence="1">
    <location>
        <position position="139"/>
    </location>
    <ligand>
        <name>4-CDP-2-C-methyl-D-erythritol 2-phosphate</name>
        <dbReference type="ChEBI" id="CHEBI:57919"/>
    </ligand>
</feature>
<feature type="binding site" evidence="1">
    <location>
        <position position="142"/>
    </location>
    <ligand>
        <name>4-CDP-2-C-methyl-D-erythritol 2-phosphate</name>
        <dbReference type="ChEBI" id="CHEBI:57919"/>
    </ligand>
</feature>
<feature type="site" description="Transition state stabilizer" evidence="1">
    <location>
        <position position="34"/>
    </location>
</feature>
<feature type="site" description="Transition state stabilizer" evidence="1">
    <location>
        <position position="133"/>
    </location>
</feature>
<accession>B7LXF8</accession>
<sequence length="159" mass="16898">MRIGHGFDVHAFGGEGPIIIGGVRIPYEKGLLAHSDGDVALHALTDALLGAAALGDIGKLFPDTDPAFKGADSRELLREAWRRIQAKGYTLGNVDVTIIAQAPKMLPHIPQMRVFIAEDLGCHMDDVNVKATTTEKLGFTGRGEGIACEAVALLIKATK</sequence>
<reference key="1">
    <citation type="journal article" date="2009" name="PLoS Genet.">
        <title>Organised genome dynamics in the Escherichia coli species results in highly diverse adaptive paths.</title>
        <authorList>
            <person name="Touchon M."/>
            <person name="Hoede C."/>
            <person name="Tenaillon O."/>
            <person name="Barbe V."/>
            <person name="Baeriswyl S."/>
            <person name="Bidet P."/>
            <person name="Bingen E."/>
            <person name="Bonacorsi S."/>
            <person name="Bouchier C."/>
            <person name="Bouvet O."/>
            <person name="Calteau A."/>
            <person name="Chiapello H."/>
            <person name="Clermont O."/>
            <person name="Cruveiller S."/>
            <person name="Danchin A."/>
            <person name="Diard M."/>
            <person name="Dossat C."/>
            <person name="Karoui M.E."/>
            <person name="Frapy E."/>
            <person name="Garry L."/>
            <person name="Ghigo J.M."/>
            <person name="Gilles A.M."/>
            <person name="Johnson J."/>
            <person name="Le Bouguenec C."/>
            <person name="Lescat M."/>
            <person name="Mangenot S."/>
            <person name="Martinez-Jehanne V."/>
            <person name="Matic I."/>
            <person name="Nassif X."/>
            <person name="Oztas S."/>
            <person name="Petit M.A."/>
            <person name="Pichon C."/>
            <person name="Rouy Z."/>
            <person name="Ruf C.S."/>
            <person name="Schneider D."/>
            <person name="Tourret J."/>
            <person name="Vacherie B."/>
            <person name="Vallenet D."/>
            <person name="Medigue C."/>
            <person name="Rocha E.P.C."/>
            <person name="Denamur E."/>
        </authorList>
    </citation>
    <scope>NUCLEOTIDE SEQUENCE [LARGE SCALE GENOMIC DNA]</scope>
    <source>
        <strain>IAI1</strain>
    </source>
</reference>
<evidence type="ECO:0000255" key="1">
    <source>
        <dbReference type="HAMAP-Rule" id="MF_00107"/>
    </source>
</evidence>
<keyword id="KW-0414">Isoprene biosynthesis</keyword>
<keyword id="KW-0456">Lyase</keyword>
<keyword id="KW-0479">Metal-binding</keyword>
<dbReference type="EC" id="4.6.1.12" evidence="1"/>
<dbReference type="EMBL" id="CU928160">
    <property type="protein sequence ID" value="CAQ99670.1"/>
    <property type="molecule type" value="Genomic_DNA"/>
</dbReference>
<dbReference type="RefSeq" id="WP_001219242.1">
    <property type="nucleotide sequence ID" value="NC_011741.1"/>
</dbReference>
<dbReference type="SMR" id="B7LXF8"/>
<dbReference type="GeneID" id="93779260"/>
<dbReference type="KEGG" id="ecr:ECIAI1_2847"/>
<dbReference type="HOGENOM" id="CLU_084630_2_0_6"/>
<dbReference type="UniPathway" id="UPA00056">
    <property type="reaction ID" value="UER00095"/>
</dbReference>
<dbReference type="GO" id="GO:0008685">
    <property type="term" value="F:2-C-methyl-D-erythritol 2,4-cyclodiphosphate synthase activity"/>
    <property type="evidence" value="ECO:0007669"/>
    <property type="project" value="UniProtKB-UniRule"/>
</dbReference>
<dbReference type="GO" id="GO:0046872">
    <property type="term" value="F:metal ion binding"/>
    <property type="evidence" value="ECO:0007669"/>
    <property type="project" value="UniProtKB-KW"/>
</dbReference>
<dbReference type="GO" id="GO:0019288">
    <property type="term" value="P:isopentenyl diphosphate biosynthetic process, methylerythritol 4-phosphate pathway"/>
    <property type="evidence" value="ECO:0007669"/>
    <property type="project" value="UniProtKB-UniRule"/>
</dbReference>
<dbReference type="GO" id="GO:0016114">
    <property type="term" value="P:terpenoid biosynthetic process"/>
    <property type="evidence" value="ECO:0007669"/>
    <property type="project" value="InterPro"/>
</dbReference>
<dbReference type="CDD" id="cd00554">
    <property type="entry name" value="MECDP_synthase"/>
    <property type="match status" value="1"/>
</dbReference>
<dbReference type="FunFam" id="3.30.1330.50:FF:000001">
    <property type="entry name" value="2-C-methyl-D-erythritol 2,4-cyclodiphosphate synthase"/>
    <property type="match status" value="1"/>
</dbReference>
<dbReference type="Gene3D" id="3.30.1330.50">
    <property type="entry name" value="2-C-methyl-D-erythritol 2,4-cyclodiphosphate synthase"/>
    <property type="match status" value="1"/>
</dbReference>
<dbReference type="HAMAP" id="MF_00107">
    <property type="entry name" value="IspF"/>
    <property type="match status" value="1"/>
</dbReference>
<dbReference type="InterPro" id="IPR003526">
    <property type="entry name" value="MECDP_synthase"/>
</dbReference>
<dbReference type="InterPro" id="IPR020555">
    <property type="entry name" value="MECDP_synthase_CS"/>
</dbReference>
<dbReference type="InterPro" id="IPR036571">
    <property type="entry name" value="MECDP_synthase_sf"/>
</dbReference>
<dbReference type="NCBIfam" id="TIGR00151">
    <property type="entry name" value="ispF"/>
    <property type="match status" value="1"/>
</dbReference>
<dbReference type="PANTHER" id="PTHR43181">
    <property type="entry name" value="2-C-METHYL-D-ERYTHRITOL 2,4-CYCLODIPHOSPHATE SYNTHASE, CHLOROPLASTIC"/>
    <property type="match status" value="1"/>
</dbReference>
<dbReference type="PANTHER" id="PTHR43181:SF1">
    <property type="entry name" value="2-C-METHYL-D-ERYTHRITOL 2,4-CYCLODIPHOSPHATE SYNTHASE, CHLOROPLASTIC"/>
    <property type="match status" value="1"/>
</dbReference>
<dbReference type="Pfam" id="PF02542">
    <property type="entry name" value="YgbB"/>
    <property type="match status" value="1"/>
</dbReference>
<dbReference type="SUPFAM" id="SSF69765">
    <property type="entry name" value="IpsF-like"/>
    <property type="match status" value="1"/>
</dbReference>
<dbReference type="PROSITE" id="PS01350">
    <property type="entry name" value="ISPF"/>
    <property type="match status" value="1"/>
</dbReference>